<protein>
    <recommendedName>
        <fullName evidence="1">Inositol 2-dehydrogenase</fullName>
        <ecNumber evidence="1">1.1.1.18</ecNumber>
    </recommendedName>
    <alternativeName>
        <fullName evidence="1">Myo-inositol 2-dehydrogenase</fullName>
        <shortName evidence="1">MI 2-dehydrogenase</shortName>
    </alternativeName>
</protein>
<evidence type="ECO:0000255" key="1">
    <source>
        <dbReference type="HAMAP-Rule" id="MF_01671"/>
    </source>
</evidence>
<dbReference type="EC" id="1.1.1.18" evidence="1"/>
<dbReference type="EMBL" id="AP009044">
    <property type="protein sequence ID" value="BAF53206.1"/>
    <property type="molecule type" value="Genomic_DNA"/>
</dbReference>
<dbReference type="RefSeq" id="WP_011896510.1">
    <property type="nucleotide sequence ID" value="NC_009342.1"/>
</dbReference>
<dbReference type="SMR" id="A4QAF9"/>
<dbReference type="KEGG" id="cgt:cgR_0243"/>
<dbReference type="HOGENOM" id="CLU_023194_0_1_11"/>
<dbReference type="PhylomeDB" id="A4QAF9"/>
<dbReference type="Proteomes" id="UP000006698">
    <property type="component" value="Chromosome"/>
</dbReference>
<dbReference type="GO" id="GO:0050112">
    <property type="term" value="F:inositol 2-dehydrogenase (NAD+) activity"/>
    <property type="evidence" value="ECO:0007669"/>
    <property type="project" value="UniProtKB-UniRule"/>
</dbReference>
<dbReference type="GO" id="GO:0000166">
    <property type="term" value="F:nucleotide binding"/>
    <property type="evidence" value="ECO:0007669"/>
    <property type="project" value="InterPro"/>
</dbReference>
<dbReference type="GO" id="GO:0019310">
    <property type="term" value="P:inositol catabolic process"/>
    <property type="evidence" value="ECO:0007669"/>
    <property type="project" value="UniProtKB-UniRule"/>
</dbReference>
<dbReference type="Gene3D" id="3.30.360.10">
    <property type="entry name" value="Dihydrodipicolinate Reductase, domain 2"/>
    <property type="match status" value="1"/>
</dbReference>
<dbReference type="Gene3D" id="3.40.50.720">
    <property type="entry name" value="NAD(P)-binding Rossmann-like Domain"/>
    <property type="match status" value="1"/>
</dbReference>
<dbReference type="HAMAP" id="MF_01671">
    <property type="entry name" value="IolG"/>
    <property type="match status" value="1"/>
</dbReference>
<dbReference type="InterPro" id="IPR050424">
    <property type="entry name" value="Gfo-Idh-MocA_inositol_DH"/>
</dbReference>
<dbReference type="InterPro" id="IPR000683">
    <property type="entry name" value="Gfo/Idh/MocA-like_OxRdtase_N"/>
</dbReference>
<dbReference type="InterPro" id="IPR055170">
    <property type="entry name" value="GFO_IDH_MocA-like_dom"/>
</dbReference>
<dbReference type="InterPro" id="IPR023794">
    <property type="entry name" value="MI/DCI_dehydrogenase"/>
</dbReference>
<dbReference type="InterPro" id="IPR036291">
    <property type="entry name" value="NAD(P)-bd_dom_sf"/>
</dbReference>
<dbReference type="PANTHER" id="PTHR43593">
    <property type="match status" value="1"/>
</dbReference>
<dbReference type="PANTHER" id="PTHR43593:SF1">
    <property type="entry name" value="INOSITOL 2-DEHYDROGENASE"/>
    <property type="match status" value="1"/>
</dbReference>
<dbReference type="Pfam" id="PF01408">
    <property type="entry name" value="GFO_IDH_MocA"/>
    <property type="match status" value="1"/>
</dbReference>
<dbReference type="Pfam" id="PF22725">
    <property type="entry name" value="GFO_IDH_MocA_C3"/>
    <property type="match status" value="1"/>
</dbReference>
<dbReference type="SUPFAM" id="SSF55347">
    <property type="entry name" value="Glyceraldehyde-3-phosphate dehydrogenase-like, C-terminal domain"/>
    <property type="match status" value="1"/>
</dbReference>
<dbReference type="SUPFAM" id="SSF51735">
    <property type="entry name" value="NAD(P)-binding Rossmann-fold domains"/>
    <property type="match status" value="1"/>
</dbReference>
<accession>A4QAF9</accession>
<name>IOLG_CORGB</name>
<feature type="chain" id="PRO_0000352567" description="Inositol 2-dehydrogenase">
    <location>
        <begin position="1"/>
        <end position="337"/>
    </location>
</feature>
<sequence>MSKSLRVGVVGAGAMGADHIDRINNRTSGAHISAIIEPDAARAAAAAENAPGAQAFTRIEDAIAADAVDAVLIAVPGQFHEPVLVPALEAGLPILCEKPLTPDSESSLRIVELEQKLDKPHIQVGFMRRFDPEYNNLRKLVESGEAGELLMLRGLHRNPSVGENYTQSMLITDSVVHEFDVIPWLAGSRVVSVEVKYPKTSSLAHSGLKEPILVIMELENGVLVDVEMNVNIQFGYQVATEAVFEKGLARIGQPSGMQRWRDGEFLINEHTDFTTRFATAYDRQIQSWVDAVHEGTLVAGPNAWDGYLVALSCEAGVKAFDGGVIPVDAAPRPDFYA</sequence>
<comment type="function">
    <text evidence="1">Involved in the oxidation of myo-inositol (MI) to 2-keto-myo-inositol (2KMI or 2-inosose).</text>
</comment>
<comment type="catalytic activity">
    <reaction evidence="1">
        <text>myo-inositol + NAD(+) = scyllo-inosose + NADH + H(+)</text>
        <dbReference type="Rhea" id="RHEA:16949"/>
        <dbReference type="ChEBI" id="CHEBI:15378"/>
        <dbReference type="ChEBI" id="CHEBI:17268"/>
        <dbReference type="ChEBI" id="CHEBI:17811"/>
        <dbReference type="ChEBI" id="CHEBI:57540"/>
        <dbReference type="ChEBI" id="CHEBI:57945"/>
        <dbReference type="EC" id="1.1.1.18"/>
    </reaction>
</comment>
<comment type="subunit">
    <text evidence="1">Homotetramer.</text>
</comment>
<comment type="similarity">
    <text evidence="1">Belongs to the Gfo/Idh/MocA family.</text>
</comment>
<reference key="1">
    <citation type="journal article" date="2007" name="Microbiology">
        <title>Comparative analysis of the Corynebacterium glutamicum group and complete genome sequence of strain R.</title>
        <authorList>
            <person name="Yukawa H."/>
            <person name="Omumasaba C.A."/>
            <person name="Nonaka H."/>
            <person name="Kos P."/>
            <person name="Okai N."/>
            <person name="Suzuki N."/>
            <person name="Suda M."/>
            <person name="Tsuge Y."/>
            <person name="Watanabe J."/>
            <person name="Ikeda Y."/>
            <person name="Vertes A.A."/>
            <person name="Inui M."/>
        </authorList>
    </citation>
    <scope>NUCLEOTIDE SEQUENCE [LARGE SCALE GENOMIC DNA]</scope>
    <source>
        <strain>R</strain>
    </source>
</reference>
<keyword id="KW-0520">NAD</keyword>
<keyword id="KW-0560">Oxidoreductase</keyword>
<proteinExistence type="inferred from homology"/>
<organism>
    <name type="scientific">Corynebacterium glutamicum (strain R)</name>
    <dbReference type="NCBI Taxonomy" id="340322"/>
    <lineage>
        <taxon>Bacteria</taxon>
        <taxon>Bacillati</taxon>
        <taxon>Actinomycetota</taxon>
        <taxon>Actinomycetes</taxon>
        <taxon>Mycobacteriales</taxon>
        <taxon>Corynebacteriaceae</taxon>
        <taxon>Corynebacterium</taxon>
    </lineage>
</organism>
<gene>
    <name evidence="1" type="primary">iolG</name>
    <name type="ordered locus">cgR_0243</name>
</gene>